<protein>
    <recommendedName>
        <fullName evidence="1">Large ribosomal subunit protein uL1</fullName>
    </recommendedName>
    <alternativeName>
        <fullName evidence="2">50S ribosomal protein L1</fullName>
    </alternativeName>
</protein>
<dbReference type="EMBL" id="CP000469">
    <property type="protein sequence ID" value="ABK46433.1"/>
    <property type="molecule type" value="Genomic_DNA"/>
</dbReference>
<dbReference type="RefSeq" id="WP_011715456.1">
    <property type="nucleotide sequence ID" value="NC_008577.1"/>
</dbReference>
<dbReference type="SMR" id="A0KRL4"/>
<dbReference type="STRING" id="94122.Shewana3_0189"/>
<dbReference type="GeneID" id="94726176"/>
<dbReference type="KEGG" id="shn:Shewana3_0189"/>
<dbReference type="eggNOG" id="COG0081">
    <property type="taxonomic scope" value="Bacteria"/>
</dbReference>
<dbReference type="HOGENOM" id="CLU_062853_0_0_6"/>
<dbReference type="OrthoDB" id="9803740at2"/>
<dbReference type="Proteomes" id="UP000002589">
    <property type="component" value="Chromosome"/>
</dbReference>
<dbReference type="GO" id="GO:0022625">
    <property type="term" value="C:cytosolic large ribosomal subunit"/>
    <property type="evidence" value="ECO:0007669"/>
    <property type="project" value="TreeGrafter"/>
</dbReference>
<dbReference type="GO" id="GO:0019843">
    <property type="term" value="F:rRNA binding"/>
    <property type="evidence" value="ECO:0007669"/>
    <property type="project" value="UniProtKB-UniRule"/>
</dbReference>
<dbReference type="GO" id="GO:0003735">
    <property type="term" value="F:structural constituent of ribosome"/>
    <property type="evidence" value="ECO:0007669"/>
    <property type="project" value="InterPro"/>
</dbReference>
<dbReference type="GO" id="GO:0000049">
    <property type="term" value="F:tRNA binding"/>
    <property type="evidence" value="ECO:0007669"/>
    <property type="project" value="UniProtKB-KW"/>
</dbReference>
<dbReference type="GO" id="GO:0006417">
    <property type="term" value="P:regulation of translation"/>
    <property type="evidence" value="ECO:0007669"/>
    <property type="project" value="UniProtKB-KW"/>
</dbReference>
<dbReference type="GO" id="GO:0006412">
    <property type="term" value="P:translation"/>
    <property type="evidence" value="ECO:0007669"/>
    <property type="project" value="UniProtKB-UniRule"/>
</dbReference>
<dbReference type="CDD" id="cd00403">
    <property type="entry name" value="Ribosomal_L1"/>
    <property type="match status" value="1"/>
</dbReference>
<dbReference type="FunFam" id="3.40.50.790:FF:000001">
    <property type="entry name" value="50S ribosomal protein L1"/>
    <property type="match status" value="1"/>
</dbReference>
<dbReference type="Gene3D" id="3.30.190.20">
    <property type="match status" value="1"/>
</dbReference>
<dbReference type="Gene3D" id="3.40.50.790">
    <property type="match status" value="1"/>
</dbReference>
<dbReference type="HAMAP" id="MF_01318_B">
    <property type="entry name" value="Ribosomal_uL1_B"/>
    <property type="match status" value="1"/>
</dbReference>
<dbReference type="InterPro" id="IPR005878">
    <property type="entry name" value="Ribosom_uL1_bac-type"/>
</dbReference>
<dbReference type="InterPro" id="IPR002143">
    <property type="entry name" value="Ribosomal_uL1"/>
</dbReference>
<dbReference type="InterPro" id="IPR023674">
    <property type="entry name" value="Ribosomal_uL1-like"/>
</dbReference>
<dbReference type="InterPro" id="IPR028364">
    <property type="entry name" value="Ribosomal_uL1/biogenesis"/>
</dbReference>
<dbReference type="InterPro" id="IPR016095">
    <property type="entry name" value="Ribosomal_uL1_3-a/b-sand"/>
</dbReference>
<dbReference type="InterPro" id="IPR023673">
    <property type="entry name" value="Ribosomal_uL1_CS"/>
</dbReference>
<dbReference type="NCBIfam" id="TIGR01169">
    <property type="entry name" value="rplA_bact"/>
    <property type="match status" value="1"/>
</dbReference>
<dbReference type="PANTHER" id="PTHR36427">
    <property type="entry name" value="54S RIBOSOMAL PROTEIN L1, MITOCHONDRIAL"/>
    <property type="match status" value="1"/>
</dbReference>
<dbReference type="PANTHER" id="PTHR36427:SF3">
    <property type="entry name" value="LARGE RIBOSOMAL SUBUNIT PROTEIN UL1M"/>
    <property type="match status" value="1"/>
</dbReference>
<dbReference type="Pfam" id="PF00687">
    <property type="entry name" value="Ribosomal_L1"/>
    <property type="match status" value="1"/>
</dbReference>
<dbReference type="PIRSF" id="PIRSF002155">
    <property type="entry name" value="Ribosomal_L1"/>
    <property type="match status" value="1"/>
</dbReference>
<dbReference type="SUPFAM" id="SSF56808">
    <property type="entry name" value="Ribosomal protein L1"/>
    <property type="match status" value="1"/>
</dbReference>
<dbReference type="PROSITE" id="PS01199">
    <property type="entry name" value="RIBOSOMAL_L1"/>
    <property type="match status" value="1"/>
</dbReference>
<comment type="function">
    <text evidence="1">Binds directly to 23S rRNA. The L1 stalk is quite mobile in the ribosome, and is involved in E site tRNA release.</text>
</comment>
<comment type="function">
    <text evidence="1">Protein L1 is also a translational repressor protein, it controls the translation of the L11 operon by binding to its mRNA.</text>
</comment>
<comment type="subunit">
    <text evidence="1">Part of the 50S ribosomal subunit.</text>
</comment>
<comment type="similarity">
    <text evidence="1">Belongs to the universal ribosomal protein uL1 family.</text>
</comment>
<organism>
    <name type="scientific">Shewanella sp. (strain ANA-3)</name>
    <dbReference type="NCBI Taxonomy" id="94122"/>
    <lineage>
        <taxon>Bacteria</taxon>
        <taxon>Pseudomonadati</taxon>
        <taxon>Pseudomonadota</taxon>
        <taxon>Gammaproteobacteria</taxon>
        <taxon>Alteromonadales</taxon>
        <taxon>Shewanellaceae</taxon>
        <taxon>Shewanella</taxon>
    </lineage>
</organism>
<reference key="1">
    <citation type="submission" date="2006-09" db="EMBL/GenBank/DDBJ databases">
        <title>Complete sequence of chromosome 1 of Shewanella sp. ANA-3.</title>
        <authorList>
            <person name="Copeland A."/>
            <person name="Lucas S."/>
            <person name="Lapidus A."/>
            <person name="Barry K."/>
            <person name="Detter J.C."/>
            <person name="Glavina del Rio T."/>
            <person name="Hammon N."/>
            <person name="Israni S."/>
            <person name="Dalin E."/>
            <person name="Tice H."/>
            <person name="Pitluck S."/>
            <person name="Chertkov O."/>
            <person name="Brettin T."/>
            <person name="Bruce D."/>
            <person name="Han C."/>
            <person name="Tapia R."/>
            <person name="Gilna P."/>
            <person name="Schmutz J."/>
            <person name="Larimer F."/>
            <person name="Land M."/>
            <person name="Hauser L."/>
            <person name="Kyrpides N."/>
            <person name="Kim E."/>
            <person name="Newman D."/>
            <person name="Salticov C."/>
            <person name="Konstantinidis K."/>
            <person name="Klappenback J."/>
            <person name="Tiedje J."/>
            <person name="Richardson P."/>
        </authorList>
    </citation>
    <scope>NUCLEOTIDE SEQUENCE [LARGE SCALE GENOMIC DNA]</scope>
    <source>
        <strain>ANA-3</strain>
    </source>
</reference>
<proteinExistence type="inferred from homology"/>
<gene>
    <name evidence="1" type="primary">rplA</name>
    <name type="ordered locus">Shewana3_0189</name>
</gene>
<evidence type="ECO:0000255" key="1">
    <source>
        <dbReference type="HAMAP-Rule" id="MF_01318"/>
    </source>
</evidence>
<evidence type="ECO:0000305" key="2"/>
<feature type="chain" id="PRO_0000308102" description="Large ribosomal subunit protein uL1">
    <location>
        <begin position="1"/>
        <end position="233"/>
    </location>
</feature>
<accession>A0KRL4</accession>
<name>RL1_SHESA</name>
<keyword id="KW-0678">Repressor</keyword>
<keyword id="KW-0687">Ribonucleoprotein</keyword>
<keyword id="KW-0689">Ribosomal protein</keyword>
<keyword id="KW-0694">RNA-binding</keyword>
<keyword id="KW-0699">rRNA-binding</keyword>
<keyword id="KW-0810">Translation regulation</keyword>
<keyword id="KW-0820">tRNA-binding</keyword>
<sequence length="233" mass="24629">MAKLTKRMRVIREKVDGTKLYEINDAVALLKELATAKFVESVDVAVNLGIDPRKSDQNVRGATVLPHGTGREVRVAVFTQGANAEAAKAAGAELVGMDDLAEQIKAGEMNFDVVIASPDAMRVVGMLGQILGPRGLMPNPKTGTVTPNVAEAVKNAKAGQVRYRNDKNGIIHTTIGKVDFTPVQLKENLEALISALKKAKPAVAKGVYVKKVSISTTMGAGVAIDQATLDTAN</sequence>